<protein>
    <recommendedName>
        <fullName evidence="1">Trigger factor</fullName>
        <shortName evidence="1">TF</shortName>
        <ecNumber evidence="1">5.2.1.8</ecNumber>
    </recommendedName>
    <alternativeName>
        <fullName evidence="1">PPIase</fullName>
    </alternativeName>
</protein>
<reference key="1">
    <citation type="journal article" date="2003" name="Appl. Microbiol. Biotechnol.">
        <title>The Corynebacterium glutamicum genome: features and impacts on biotechnological processes.</title>
        <authorList>
            <person name="Ikeda M."/>
            <person name="Nakagawa S."/>
        </authorList>
    </citation>
    <scope>NUCLEOTIDE SEQUENCE [LARGE SCALE GENOMIC DNA]</scope>
    <source>
        <strain>ATCC 13032 / DSM 20300 / JCM 1318 / BCRC 11384 / CCUG 27702 / LMG 3730 / NBRC 12168 / NCIMB 10025 / NRRL B-2784 / 534</strain>
    </source>
</reference>
<reference key="2">
    <citation type="journal article" date="2003" name="J. Biotechnol.">
        <title>The complete Corynebacterium glutamicum ATCC 13032 genome sequence and its impact on the production of L-aspartate-derived amino acids and vitamins.</title>
        <authorList>
            <person name="Kalinowski J."/>
            <person name="Bathe B."/>
            <person name="Bartels D."/>
            <person name="Bischoff N."/>
            <person name="Bott M."/>
            <person name="Burkovski A."/>
            <person name="Dusch N."/>
            <person name="Eggeling L."/>
            <person name="Eikmanns B.J."/>
            <person name="Gaigalat L."/>
            <person name="Goesmann A."/>
            <person name="Hartmann M."/>
            <person name="Huthmacher K."/>
            <person name="Kraemer R."/>
            <person name="Linke B."/>
            <person name="McHardy A.C."/>
            <person name="Meyer F."/>
            <person name="Moeckel B."/>
            <person name="Pfefferle W."/>
            <person name="Puehler A."/>
            <person name="Rey D.A."/>
            <person name="Rueckert C."/>
            <person name="Rupp O."/>
            <person name="Sahm H."/>
            <person name="Wendisch V.F."/>
            <person name="Wiegraebe I."/>
            <person name="Tauch A."/>
        </authorList>
    </citation>
    <scope>NUCLEOTIDE SEQUENCE [LARGE SCALE GENOMIC DNA]</scope>
    <source>
        <strain>ATCC 13032 / DSM 20300 / JCM 1318 / BCRC 11384 / CCUG 27702 / LMG 3730 / NBRC 12168 / NCIMB 10025 / NRRL B-2784 / 534</strain>
    </source>
</reference>
<accession>Q8NMZ9</accession>
<gene>
    <name evidence="1" type="primary">tig</name>
    <name type="ordered locus">Cgl2414</name>
    <name type="ordered locus">cg2647</name>
</gene>
<dbReference type="EC" id="5.2.1.8" evidence="1"/>
<dbReference type="EMBL" id="BA000036">
    <property type="protein sequence ID" value="BAB99807.1"/>
    <property type="molecule type" value="Genomic_DNA"/>
</dbReference>
<dbReference type="EMBL" id="BX927155">
    <property type="protein sequence ID" value="CAF21077.1"/>
    <property type="molecule type" value="Genomic_DNA"/>
</dbReference>
<dbReference type="RefSeq" id="NP_601613.1">
    <property type="nucleotide sequence ID" value="NC_003450.3"/>
</dbReference>
<dbReference type="RefSeq" id="WP_004567596.1">
    <property type="nucleotide sequence ID" value="NC_006958.1"/>
</dbReference>
<dbReference type="SMR" id="Q8NMZ9"/>
<dbReference type="STRING" id="196627.cg2647"/>
<dbReference type="GeneID" id="1020362"/>
<dbReference type="KEGG" id="cgb:cg2647"/>
<dbReference type="KEGG" id="cgl:Cgl2414"/>
<dbReference type="PATRIC" id="fig|196627.13.peg.2347"/>
<dbReference type="eggNOG" id="COG0544">
    <property type="taxonomic scope" value="Bacteria"/>
</dbReference>
<dbReference type="HOGENOM" id="CLU_033058_3_0_11"/>
<dbReference type="OrthoDB" id="9767721at2"/>
<dbReference type="BioCyc" id="CORYNE:G18NG-12011-MONOMER"/>
<dbReference type="Proteomes" id="UP000000582">
    <property type="component" value="Chromosome"/>
</dbReference>
<dbReference type="Proteomes" id="UP000001009">
    <property type="component" value="Chromosome"/>
</dbReference>
<dbReference type="GO" id="GO:0005737">
    <property type="term" value="C:cytoplasm"/>
    <property type="evidence" value="ECO:0007669"/>
    <property type="project" value="UniProtKB-SubCell"/>
</dbReference>
<dbReference type="GO" id="GO:0003755">
    <property type="term" value="F:peptidyl-prolyl cis-trans isomerase activity"/>
    <property type="evidence" value="ECO:0007669"/>
    <property type="project" value="UniProtKB-UniRule"/>
</dbReference>
<dbReference type="GO" id="GO:0044183">
    <property type="term" value="F:protein folding chaperone"/>
    <property type="evidence" value="ECO:0007669"/>
    <property type="project" value="TreeGrafter"/>
</dbReference>
<dbReference type="GO" id="GO:0043022">
    <property type="term" value="F:ribosome binding"/>
    <property type="evidence" value="ECO:0007669"/>
    <property type="project" value="TreeGrafter"/>
</dbReference>
<dbReference type="GO" id="GO:0051083">
    <property type="term" value="P:'de novo' cotranslational protein folding"/>
    <property type="evidence" value="ECO:0007669"/>
    <property type="project" value="TreeGrafter"/>
</dbReference>
<dbReference type="GO" id="GO:0051301">
    <property type="term" value="P:cell division"/>
    <property type="evidence" value="ECO:0007669"/>
    <property type="project" value="UniProtKB-KW"/>
</dbReference>
<dbReference type="GO" id="GO:0061077">
    <property type="term" value="P:chaperone-mediated protein folding"/>
    <property type="evidence" value="ECO:0007669"/>
    <property type="project" value="TreeGrafter"/>
</dbReference>
<dbReference type="GO" id="GO:0015031">
    <property type="term" value="P:protein transport"/>
    <property type="evidence" value="ECO:0007669"/>
    <property type="project" value="UniProtKB-UniRule"/>
</dbReference>
<dbReference type="GO" id="GO:0043335">
    <property type="term" value="P:protein unfolding"/>
    <property type="evidence" value="ECO:0007669"/>
    <property type="project" value="TreeGrafter"/>
</dbReference>
<dbReference type="Gene3D" id="3.10.50.40">
    <property type="match status" value="1"/>
</dbReference>
<dbReference type="Gene3D" id="3.30.70.1050">
    <property type="entry name" value="Trigger factor ribosome-binding domain"/>
    <property type="match status" value="1"/>
</dbReference>
<dbReference type="Gene3D" id="1.10.3120.10">
    <property type="entry name" value="Trigger factor, C-terminal domain"/>
    <property type="match status" value="1"/>
</dbReference>
<dbReference type="HAMAP" id="MF_00303">
    <property type="entry name" value="Trigger_factor_Tig"/>
    <property type="match status" value="1"/>
</dbReference>
<dbReference type="InterPro" id="IPR046357">
    <property type="entry name" value="PPIase_dom_sf"/>
</dbReference>
<dbReference type="InterPro" id="IPR001179">
    <property type="entry name" value="PPIase_FKBP_dom"/>
</dbReference>
<dbReference type="InterPro" id="IPR005215">
    <property type="entry name" value="Trig_fac"/>
</dbReference>
<dbReference type="InterPro" id="IPR008880">
    <property type="entry name" value="Trigger_fac_C"/>
</dbReference>
<dbReference type="InterPro" id="IPR037041">
    <property type="entry name" value="Trigger_fac_C_sf"/>
</dbReference>
<dbReference type="InterPro" id="IPR008881">
    <property type="entry name" value="Trigger_fac_ribosome-bd_bac"/>
</dbReference>
<dbReference type="InterPro" id="IPR036611">
    <property type="entry name" value="Trigger_fac_ribosome-bd_sf"/>
</dbReference>
<dbReference type="InterPro" id="IPR027304">
    <property type="entry name" value="Trigger_fact/SurA_dom_sf"/>
</dbReference>
<dbReference type="NCBIfam" id="TIGR00115">
    <property type="entry name" value="tig"/>
    <property type="match status" value="1"/>
</dbReference>
<dbReference type="PANTHER" id="PTHR30560">
    <property type="entry name" value="TRIGGER FACTOR CHAPERONE AND PEPTIDYL-PROLYL CIS/TRANS ISOMERASE"/>
    <property type="match status" value="1"/>
</dbReference>
<dbReference type="PANTHER" id="PTHR30560:SF3">
    <property type="entry name" value="TRIGGER FACTOR-LIKE PROTEIN TIG, CHLOROPLASTIC"/>
    <property type="match status" value="1"/>
</dbReference>
<dbReference type="Pfam" id="PF00254">
    <property type="entry name" value="FKBP_C"/>
    <property type="match status" value="1"/>
</dbReference>
<dbReference type="Pfam" id="PF05698">
    <property type="entry name" value="Trigger_C"/>
    <property type="match status" value="1"/>
</dbReference>
<dbReference type="Pfam" id="PF05697">
    <property type="entry name" value="Trigger_N"/>
    <property type="match status" value="1"/>
</dbReference>
<dbReference type="PIRSF" id="PIRSF003095">
    <property type="entry name" value="Trigger_factor"/>
    <property type="match status" value="1"/>
</dbReference>
<dbReference type="SUPFAM" id="SSF54534">
    <property type="entry name" value="FKBP-like"/>
    <property type="match status" value="1"/>
</dbReference>
<dbReference type="SUPFAM" id="SSF109998">
    <property type="entry name" value="Triger factor/SurA peptide-binding domain-like"/>
    <property type="match status" value="1"/>
</dbReference>
<dbReference type="SUPFAM" id="SSF102735">
    <property type="entry name" value="Trigger factor ribosome-binding domain"/>
    <property type="match status" value="1"/>
</dbReference>
<dbReference type="PROSITE" id="PS50059">
    <property type="entry name" value="FKBP_PPIASE"/>
    <property type="match status" value="1"/>
</dbReference>
<proteinExistence type="inferred from homology"/>
<organism>
    <name type="scientific">Corynebacterium glutamicum (strain ATCC 13032 / DSM 20300 / JCM 1318 / BCRC 11384 / CCUG 27702 / LMG 3730 / NBRC 12168 / NCIMB 10025 / NRRL B-2784 / 534)</name>
    <dbReference type="NCBI Taxonomy" id="196627"/>
    <lineage>
        <taxon>Bacteria</taxon>
        <taxon>Bacillati</taxon>
        <taxon>Actinomycetota</taxon>
        <taxon>Actinomycetes</taxon>
        <taxon>Mycobacteriales</taxon>
        <taxon>Corynebacteriaceae</taxon>
        <taxon>Corynebacterium</taxon>
    </lineage>
</organism>
<comment type="function">
    <text evidence="1">Involved in protein export. Acts as a chaperone by maintaining the newly synthesized protein in an open conformation. Functions as a peptidyl-prolyl cis-trans isomerase.</text>
</comment>
<comment type="catalytic activity">
    <reaction evidence="1">
        <text>[protein]-peptidylproline (omega=180) = [protein]-peptidylproline (omega=0)</text>
        <dbReference type="Rhea" id="RHEA:16237"/>
        <dbReference type="Rhea" id="RHEA-COMP:10747"/>
        <dbReference type="Rhea" id="RHEA-COMP:10748"/>
        <dbReference type="ChEBI" id="CHEBI:83833"/>
        <dbReference type="ChEBI" id="CHEBI:83834"/>
        <dbReference type="EC" id="5.2.1.8"/>
    </reaction>
</comment>
<comment type="subcellular location">
    <subcellularLocation>
        <location>Cytoplasm</location>
    </subcellularLocation>
    <text evidence="1">About half TF is bound to the ribosome near the polypeptide exit tunnel while the other half is free in the cytoplasm.</text>
</comment>
<comment type="domain">
    <text evidence="1">Consists of 3 domains; the N-terminus binds the ribosome, the middle domain has PPIase activity, while the C-terminus has intrinsic chaperone activity on its own.</text>
</comment>
<comment type="similarity">
    <text evidence="1">Belongs to the FKBP-type PPIase family. Tig subfamily.</text>
</comment>
<name>TIG_CORGL</name>
<feature type="chain" id="PRO_0000179342" description="Trigger factor">
    <location>
        <begin position="1"/>
        <end position="449"/>
    </location>
</feature>
<feature type="domain" description="PPIase FKBP-type" evidence="1">
    <location>
        <begin position="162"/>
        <end position="243"/>
    </location>
</feature>
<feature type="region of interest" description="Disordered" evidence="2">
    <location>
        <begin position="428"/>
        <end position="449"/>
    </location>
</feature>
<feature type="compositionally biased region" description="Basic and acidic residues" evidence="2">
    <location>
        <begin position="428"/>
        <end position="437"/>
    </location>
</feature>
<feature type="compositionally biased region" description="Acidic residues" evidence="2">
    <location>
        <begin position="438"/>
        <end position="449"/>
    </location>
</feature>
<sequence>MKSSVEKLSDTRSKITVEVPFSELKPEIDQAYAALAQQVQIPGFRKGKAPRQLIDARFGRGAVLEQVVNDMLPNRYAQAIEAEGIKAIGQPNVEVTKIEDNELVEFVAEVDVRPEFELPKFEDITVEVPAIKADEEAIEAELETLRARFSTLKDHNHKLKKGEFVTINITASIDGEKIEEATTEGLSYEIGSDDLIDGLDKALIGAKKDETVEFTSELANGEHKGKEAQISVEITATKQRELPELDDEFAQLASEFDTIEELRESTVSDVEAKQKNEQAAAIRDEVLAAALGEADFALPQSIVDEQAHSQLHQLLGELAHDDAALNSLLEAQGTTREEFDKKNVEDAEKAVRTQLFLDTLSEVEEPEVSQQELTDHILFTAQSYGMDPNQFIGQLQQSGQIANLFSDVRRGKALAQAICRVNVKDSEGNEIDPKEYFGEEEVAETESEA</sequence>
<keyword id="KW-0131">Cell cycle</keyword>
<keyword id="KW-0132">Cell division</keyword>
<keyword id="KW-0143">Chaperone</keyword>
<keyword id="KW-0963">Cytoplasm</keyword>
<keyword id="KW-0413">Isomerase</keyword>
<keyword id="KW-1185">Reference proteome</keyword>
<keyword id="KW-0697">Rotamase</keyword>
<evidence type="ECO:0000255" key="1">
    <source>
        <dbReference type="HAMAP-Rule" id="MF_00303"/>
    </source>
</evidence>
<evidence type="ECO:0000256" key="2">
    <source>
        <dbReference type="SAM" id="MobiDB-lite"/>
    </source>
</evidence>